<accession>Q93VK5</accession>
<accession>Q9C6S0</accession>
<reference key="1">
    <citation type="journal article" date="2000" name="Nature">
        <title>Sequence and analysis of chromosome 1 of the plant Arabidopsis thaliana.</title>
        <authorList>
            <person name="Theologis A."/>
            <person name="Ecker J.R."/>
            <person name="Palm C.J."/>
            <person name="Federspiel N.A."/>
            <person name="Kaul S."/>
            <person name="White O."/>
            <person name="Alonso J."/>
            <person name="Altafi H."/>
            <person name="Araujo R."/>
            <person name="Bowman C.L."/>
            <person name="Brooks S.Y."/>
            <person name="Buehler E."/>
            <person name="Chan A."/>
            <person name="Chao Q."/>
            <person name="Chen H."/>
            <person name="Cheuk R.F."/>
            <person name="Chin C.W."/>
            <person name="Chung M.K."/>
            <person name="Conn L."/>
            <person name="Conway A.B."/>
            <person name="Conway A.R."/>
            <person name="Creasy T.H."/>
            <person name="Dewar K."/>
            <person name="Dunn P."/>
            <person name="Etgu P."/>
            <person name="Feldblyum T.V."/>
            <person name="Feng J.-D."/>
            <person name="Fong B."/>
            <person name="Fujii C.Y."/>
            <person name="Gill J.E."/>
            <person name="Goldsmith A.D."/>
            <person name="Haas B."/>
            <person name="Hansen N.F."/>
            <person name="Hughes B."/>
            <person name="Huizar L."/>
            <person name="Hunter J.L."/>
            <person name="Jenkins J."/>
            <person name="Johnson-Hopson C."/>
            <person name="Khan S."/>
            <person name="Khaykin E."/>
            <person name="Kim C.J."/>
            <person name="Koo H.L."/>
            <person name="Kremenetskaia I."/>
            <person name="Kurtz D.B."/>
            <person name="Kwan A."/>
            <person name="Lam B."/>
            <person name="Langin-Hooper S."/>
            <person name="Lee A."/>
            <person name="Lee J.M."/>
            <person name="Lenz C.A."/>
            <person name="Li J.H."/>
            <person name="Li Y.-P."/>
            <person name="Lin X."/>
            <person name="Liu S.X."/>
            <person name="Liu Z.A."/>
            <person name="Luros J.S."/>
            <person name="Maiti R."/>
            <person name="Marziali A."/>
            <person name="Militscher J."/>
            <person name="Miranda M."/>
            <person name="Nguyen M."/>
            <person name="Nierman W.C."/>
            <person name="Osborne B.I."/>
            <person name="Pai G."/>
            <person name="Peterson J."/>
            <person name="Pham P.K."/>
            <person name="Rizzo M."/>
            <person name="Rooney T."/>
            <person name="Rowley D."/>
            <person name="Sakano H."/>
            <person name="Salzberg S.L."/>
            <person name="Schwartz J.R."/>
            <person name="Shinn P."/>
            <person name="Southwick A.M."/>
            <person name="Sun H."/>
            <person name="Tallon L.J."/>
            <person name="Tambunga G."/>
            <person name="Toriumi M.J."/>
            <person name="Town C.D."/>
            <person name="Utterback T."/>
            <person name="Van Aken S."/>
            <person name="Vaysberg M."/>
            <person name="Vysotskaia V.S."/>
            <person name="Walker M."/>
            <person name="Wu D."/>
            <person name="Yu G."/>
            <person name="Fraser C.M."/>
            <person name="Venter J.C."/>
            <person name="Davis R.W."/>
        </authorList>
    </citation>
    <scope>NUCLEOTIDE SEQUENCE [LARGE SCALE GENOMIC DNA]</scope>
    <source>
        <strain>cv. Columbia</strain>
    </source>
</reference>
<reference key="2">
    <citation type="journal article" date="2017" name="Plant J.">
        <title>Araport11: a complete reannotation of the Arabidopsis thaliana reference genome.</title>
        <authorList>
            <person name="Cheng C.Y."/>
            <person name="Krishnakumar V."/>
            <person name="Chan A.P."/>
            <person name="Thibaud-Nissen F."/>
            <person name="Schobel S."/>
            <person name="Town C.D."/>
        </authorList>
    </citation>
    <scope>GENOME REANNOTATION</scope>
    <source>
        <strain>cv. Columbia</strain>
    </source>
</reference>
<reference key="3">
    <citation type="journal article" date="2003" name="Science">
        <title>Empirical analysis of transcriptional activity in the Arabidopsis genome.</title>
        <authorList>
            <person name="Yamada K."/>
            <person name="Lim J."/>
            <person name="Dale J.M."/>
            <person name="Chen H."/>
            <person name="Shinn P."/>
            <person name="Palm C.J."/>
            <person name="Southwick A.M."/>
            <person name="Wu H.C."/>
            <person name="Kim C.J."/>
            <person name="Nguyen M."/>
            <person name="Pham P.K."/>
            <person name="Cheuk R.F."/>
            <person name="Karlin-Newmann G."/>
            <person name="Liu S.X."/>
            <person name="Lam B."/>
            <person name="Sakano H."/>
            <person name="Wu T."/>
            <person name="Yu G."/>
            <person name="Miranda M."/>
            <person name="Quach H.L."/>
            <person name="Tripp M."/>
            <person name="Chang C.H."/>
            <person name="Lee J.M."/>
            <person name="Toriumi M.J."/>
            <person name="Chan M.M."/>
            <person name="Tang C.C."/>
            <person name="Onodera C.S."/>
            <person name="Deng J.M."/>
            <person name="Akiyama K."/>
            <person name="Ansari Y."/>
            <person name="Arakawa T."/>
            <person name="Banh J."/>
            <person name="Banno F."/>
            <person name="Bowser L."/>
            <person name="Brooks S.Y."/>
            <person name="Carninci P."/>
            <person name="Chao Q."/>
            <person name="Choy N."/>
            <person name="Enju A."/>
            <person name="Goldsmith A.D."/>
            <person name="Gurjal M."/>
            <person name="Hansen N.F."/>
            <person name="Hayashizaki Y."/>
            <person name="Johnson-Hopson C."/>
            <person name="Hsuan V.W."/>
            <person name="Iida K."/>
            <person name="Karnes M."/>
            <person name="Khan S."/>
            <person name="Koesema E."/>
            <person name="Ishida J."/>
            <person name="Jiang P.X."/>
            <person name="Jones T."/>
            <person name="Kawai J."/>
            <person name="Kamiya A."/>
            <person name="Meyers C."/>
            <person name="Nakajima M."/>
            <person name="Narusaka M."/>
            <person name="Seki M."/>
            <person name="Sakurai T."/>
            <person name="Satou M."/>
            <person name="Tamse R."/>
            <person name="Vaysberg M."/>
            <person name="Wallender E.K."/>
            <person name="Wong C."/>
            <person name="Yamamura Y."/>
            <person name="Yuan S."/>
            <person name="Shinozaki K."/>
            <person name="Davis R.W."/>
            <person name="Theologis A."/>
            <person name="Ecker J.R."/>
        </authorList>
    </citation>
    <scope>NUCLEOTIDE SEQUENCE [LARGE SCALE MRNA]</scope>
    <source>
        <strain>cv. Columbia</strain>
    </source>
</reference>
<reference key="4">
    <citation type="journal article" date="2006" name="FEBS Lett.">
        <title>Elucidation of the beta-carotene hydroxylation pathway in Arabidopsis thaliana.</title>
        <authorList>
            <person name="Fiore A."/>
            <person name="Dall'osto L."/>
            <person name="Fraser P.D."/>
            <person name="Bassi R."/>
            <person name="Giuliano G."/>
        </authorList>
    </citation>
    <scope>FUNCTION</scope>
    <scope>DISRUPTION PHENOTYPE</scope>
</reference>
<reference key="5">
    <citation type="journal article" date="2006" name="Proc. Natl. Acad. Sci. U.S.A.">
        <title>Defining the primary route for lutein synthesis in plants: the role of Arabidopsis carotenoid beta-ring hydroxylase CYP97A3.</title>
        <authorList>
            <person name="Kim J."/>
            <person name="DellaPenna D."/>
        </authorList>
    </citation>
    <scope>FUNCTION</scope>
    <scope>DISRUPTION PHENOTYPE</scope>
    <scope>MUTAGENESIS OF GLU-283</scope>
</reference>
<reference key="6">
    <citation type="journal article" date="2009" name="Plant Cell Physiol.">
        <title>The evolution and function of carotenoid hydroxylases in Arabidopsis.</title>
        <authorList>
            <person name="Kim J."/>
            <person name="Smith J.J."/>
            <person name="Tian L."/>
            <person name="Dellapenna D."/>
        </authorList>
    </citation>
    <scope>FUNCTION</scope>
</reference>
<reference key="7">
    <citation type="journal article" date="2020" name="Proc. Natl. Acad. Sci. U.S.A.">
        <title>Structural basis for plant lutein biosynthesis from alpha-carotene.</title>
        <authorList>
            <person name="Niu G."/>
            <person name="Guo Q."/>
            <person name="Wang J."/>
            <person name="Zhao S."/>
            <person name="He Y."/>
            <person name="Liu L."/>
        </authorList>
    </citation>
    <scope>X-RAY CRYSTALLOGRAPHY (1.70 ANGSTROMS) OF 78-595 IN COMPLEX WITH HEME</scope>
    <scope>COFACTOR</scope>
</reference>
<name>LUT5_ARATH</name>
<keyword id="KW-0002">3D-structure</keyword>
<keyword id="KW-0125">Carotenoid biosynthesis</keyword>
<keyword id="KW-0150">Chloroplast</keyword>
<keyword id="KW-0349">Heme</keyword>
<keyword id="KW-0408">Iron</keyword>
<keyword id="KW-0479">Metal-binding</keyword>
<keyword id="KW-0503">Monooxygenase</keyword>
<keyword id="KW-0560">Oxidoreductase</keyword>
<keyword id="KW-0934">Plastid</keyword>
<keyword id="KW-1185">Reference proteome</keyword>
<keyword id="KW-0809">Transit peptide</keyword>
<proteinExistence type="evidence at protein level"/>
<comment type="function">
    <text evidence="2 3 4">Heme-containing cytochrome P450 involved in the biosynthesis of xanthophylls. Specific for beta-ring hydroxylation of alpha- and beta-carotene. Also has a low activity toward the epsilon-rings of alpha-carotene. The beta-ring of alpha-carotene is the preferred substrate in planta.</text>
</comment>
<comment type="cofactor">
    <cofactor evidence="5">
        <name>heme</name>
        <dbReference type="ChEBI" id="CHEBI:30413"/>
    </cofactor>
</comment>
<comment type="subcellular location">
    <subcellularLocation>
        <location evidence="1">Plastid</location>
        <location evidence="1">Chloroplast</location>
    </subcellularLocation>
</comment>
<comment type="disruption phenotype">
    <text evidence="2 3">Accumulation of alpha-carotene and alpha-cryptoxanthin. Triple mutant cyp97a3, bch1 and bch2 has a highly retarded growth.</text>
</comment>
<comment type="miscellaneous">
    <text>Alpha-carotene is incorporated into photosystems in lut5 mutants.</text>
</comment>
<comment type="similarity">
    <text evidence="6">Belongs to the cytochrome P450 family.</text>
</comment>
<comment type="sequence caution" evidence="6">
    <conflict type="erroneous initiation">
        <sequence resource="EMBL-CDS" id="AAG50718"/>
    </conflict>
    <text>Truncated N-terminus.</text>
</comment>
<dbReference type="EC" id="1.14.-.-"/>
<dbReference type="EMBL" id="AC079041">
    <property type="protein sequence ID" value="AAG50718.1"/>
    <property type="status" value="ALT_INIT"/>
    <property type="molecule type" value="Genomic_DNA"/>
</dbReference>
<dbReference type="EMBL" id="CP002684">
    <property type="protein sequence ID" value="AEE31394.1"/>
    <property type="molecule type" value="Genomic_DNA"/>
</dbReference>
<dbReference type="EMBL" id="AY056446">
    <property type="protein sequence ID" value="AAL08302.1"/>
    <property type="molecule type" value="mRNA"/>
</dbReference>
<dbReference type="EMBL" id="AY058173">
    <property type="protein sequence ID" value="AAL25587.1"/>
    <property type="molecule type" value="mRNA"/>
</dbReference>
<dbReference type="EMBL" id="AY142017">
    <property type="protein sequence ID" value="AAM98281.1"/>
    <property type="molecule type" value="mRNA"/>
</dbReference>
<dbReference type="PIR" id="F86441">
    <property type="entry name" value="F86441"/>
</dbReference>
<dbReference type="RefSeq" id="NP_564384.1">
    <property type="nucleotide sequence ID" value="NM_102914.3"/>
</dbReference>
<dbReference type="PDB" id="6J94">
    <property type="method" value="X-ray"/>
    <property type="resolution" value="2.40 A"/>
    <property type="chains" value="A/B=78-595"/>
</dbReference>
<dbReference type="PDB" id="6J95">
    <property type="method" value="X-ray"/>
    <property type="resolution" value="2.00 A"/>
    <property type="chains" value="A=78-595"/>
</dbReference>
<dbReference type="PDB" id="6L8I">
    <property type="method" value="X-ray"/>
    <property type="resolution" value="1.70 A"/>
    <property type="chains" value="A=78-595"/>
</dbReference>
<dbReference type="PDB" id="6L8J">
    <property type="method" value="X-ray"/>
    <property type="resolution" value="2.40 A"/>
    <property type="chains" value="A=78-595"/>
</dbReference>
<dbReference type="PDBsum" id="6J94"/>
<dbReference type="PDBsum" id="6J95"/>
<dbReference type="PDBsum" id="6L8I"/>
<dbReference type="PDBsum" id="6L8J"/>
<dbReference type="SMR" id="Q93VK5"/>
<dbReference type="FunCoup" id="Q93VK5">
    <property type="interactions" value="1095"/>
</dbReference>
<dbReference type="STRING" id="3702.Q93VK5"/>
<dbReference type="iPTMnet" id="Q93VK5"/>
<dbReference type="PaxDb" id="3702-AT1G31800.1"/>
<dbReference type="ProteomicsDB" id="238683"/>
<dbReference type="EnsemblPlants" id="AT1G31800.1">
    <property type="protein sequence ID" value="AT1G31800.1"/>
    <property type="gene ID" value="AT1G31800"/>
</dbReference>
<dbReference type="GeneID" id="840067"/>
<dbReference type="Gramene" id="AT1G31800.1">
    <property type="protein sequence ID" value="AT1G31800.1"/>
    <property type="gene ID" value="AT1G31800"/>
</dbReference>
<dbReference type="KEGG" id="ath:AT1G31800"/>
<dbReference type="Araport" id="AT1G31800"/>
<dbReference type="TAIR" id="AT1G31800">
    <property type="gene designation" value="CYP97A3"/>
</dbReference>
<dbReference type="eggNOG" id="KOG0157">
    <property type="taxonomic scope" value="Eukaryota"/>
</dbReference>
<dbReference type="HOGENOM" id="CLU_001570_5_5_1"/>
<dbReference type="InParanoid" id="Q93VK5"/>
<dbReference type="OMA" id="DGIHRIW"/>
<dbReference type="OrthoDB" id="1470350at2759"/>
<dbReference type="PhylomeDB" id="Q93VK5"/>
<dbReference type="BRENDA" id="1.14.14.158">
    <property type="organism ID" value="399"/>
</dbReference>
<dbReference type="PRO" id="PR:Q93VK5"/>
<dbReference type="Proteomes" id="UP000006548">
    <property type="component" value="Chromosome 1"/>
</dbReference>
<dbReference type="ExpressionAtlas" id="Q93VK5">
    <property type="expression patterns" value="baseline and differential"/>
</dbReference>
<dbReference type="GO" id="GO:0009507">
    <property type="term" value="C:chloroplast"/>
    <property type="evidence" value="ECO:0007005"/>
    <property type="project" value="TAIR"/>
</dbReference>
<dbReference type="GO" id="GO:0009941">
    <property type="term" value="C:chloroplast envelope"/>
    <property type="evidence" value="ECO:0007005"/>
    <property type="project" value="TAIR"/>
</dbReference>
<dbReference type="GO" id="GO:0010291">
    <property type="term" value="F:beta-carotene 3-hydroxylase activity"/>
    <property type="evidence" value="ECO:0000315"/>
    <property type="project" value="TAIR"/>
</dbReference>
<dbReference type="GO" id="GO:0020037">
    <property type="term" value="F:heme binding"/>
    <property type="evidence" value="ECO:0000314"/>
    <property type="project" value="UniProtKB"/>
</dbReference>
<dbReference type="GO" id="GO:0005506">
    <property type="term" value="F:iron ion binding"/>
    <property type="evidence" value="ECO:0007669"/>
    <property type="project" value="InterPro"/>
</dbReference>
<dbReference type="GO" id="GO:0016705">
    <property type="term" value="F:oxidoreductase activity, acting on paired donors, with incorporation or reduction of molecular oxygen"/>
    <property type="evidence" value="ECO:0007669"/>
    <property type="project" value="InterPro"/>
</dbReference>
<dbReference type="GO" id="GO:0016117">
    <property type="term" value="P:carotenoid biosynthetic process"/>
    <property type="evidence" value="ECO:0000315"/>
    <property type="project" value="TAIR"/>
</dbReference>
<dbReference type="GO" id="GO:0016123">
    <property type="term" value="P:xanthophyll biosynthetic process"/>
    <property type="evidence" value="ECO:0000316"/>
    <property type="project" value="TAIR"/>
</dbReference>
<dbReference type="CDD" id="cd11046">
    <property type="entry name" value="CYP97"/>
    <property type="match status" value="1"/>
</dbReference>
<dbReference type="FunFam" id="1.10.630.10:FF:000080">
    <property type="entry name" value="Carotene epsilon-monooxygenase, chloroplastic"/>
    <property type="match status" value="1"/>
</dbReference>
<dbReference type="Gene3D" id="1.10.630.10">
    <property type="entry name" value="Cytochrome P450"/>
    <property type="match status" value="1"/>
</dbReference>
<dbReference type="InterPro" id="IPR001128">
    <property type="entry name" value="Cyt_P450"/>
</dbReference>
<dbReference type="InterPro" id="IPR017972">
    <property type="entry name" value="Cyt_P450_CS"/>
</dbReference>
<dbReference type="InterPro" id="IPR002401">
    <property type="entry name" value="Cyt_P450_E_grp-I"/>
</dbReference>
<dbReference type="InterPro" id="IPR036396">
    <property type="entry name" value="Cyt_P450_sf"/>
</dbReference>
<dbReference type="InterPro" id="IPR050196">
    <property type="entry name" value="Cytochrome_P450_Monoox"/>
</dbReference>
<dbReference type="PANTHER" id="PTHR24291">
    <property type="entry name" value="CYTOCHROME P450 FAMILY 4"/>
    <property type="match status" value="1"/>
</dbReference>
<dbReference type="PANTHER" id="PTHR24291:SF171">
    <property type="entry name" value="PROTEIN LUTEIN DEFICIENT 5, CHLOROPLASTIC"/>
    <property type="match status" value="1"/>
</dbReference>
<dbReference type="Pfam" id="PF00067">
    <property type="entry name" value="p450"/>
    <property type="match status" value="1"/>
</dbReference>
<dbReference type="PRINTS" id="PR00463">
    <property type="entry name" value="EP450I"/>
</dbReference>
<dbReference type="PRINTS" id="PR00385">
    <property type="entry name" value="P450"/>
</dbReference>
<dbReference type="SUPFAM" id="SSF48264">
    <property type="entry name" value="Cytochrome P450"/>
    <property type="match status" value="1"/>
</dbReference>
<dbReference type="PROSITE" id="PS00086">
    <property type="entry name" value="CYTOCHROME_P450"/>
    <property type="match status" value="1"/>
</dbReference>
<protein>
    <recommendedName>
        <fullName>Protein LUTEIN DEFICIENT 5, chloroplastic</fullName>
        <ecNumber>1.14.-.-</ecNumber>
    </recommendedName>
    <alternativeName>
        <fullName>Cytochrome P450 97A3</fullName>
    </alternativeName>
</protein>
<gene>
    <name type="primary">CYP97A3</name>
    <name type="synonym">LUT5</name>
    <name type="ordered locus">At1g31800</name>
    <name type="ORF">F5M6.19</name>
</gene>
<evidence type="ECO:0000255" key="1"/>
<evidence type="ECO:0000269" key="2">
    <source>
    </source>
</evidence>
<evidence type="ECO:0000269" key="3">
    <source>
    </source>
</evidence>
<evidence type="ECO:0000269" key="4">
    <source>
    </source>
</evidence>
<evidence type="ECO:0000269" key="5">
    <source>
    </source>
</evidence>
<evidence type="ECO:0000305" key="6"/>
<evidence type="ECO:0007829" key="7">
    <source>
        <dbReference type="PDB" id="6J94"/>
    </source>
</evidence>
<evidence type="ECO:0007829" key="8">
    <source>
        <dbReference type="PDB" id="6L8I"/>
    </source>
</evidence>
<evidence type="ECO:0007829" key="9">
    <source>
        <dbReference type="PDB" id="6L8J"/>
    </source>
</evidence>
<sequence length="595" mass="66846">MAMAFPLSYTPTITVKPVTYSRRSNFVVFSSSSNGRDPLEENSVPNGVKSLEKLQEEKRRAELSARIASGAFTVRKSSFPSTVKNGLSKIGIPSNVLDFMFDWTGSDQDYPKVPEAKGSIQAVRNEAFFIPLYELFLTYGGIFRLTFGPKSFLIVSDPSIAKHILKDNAKAYSKGILAEILDFVMGKGLIPADGEIWRRRRRAIVPALHQKYVAAMISLFGEASDRLCQKLDAAALKGEEVEMESLFSRLTLDIIGKAVFNYDFDSLTNDTGVIEAVYTVLREAEDRSVSPIPVWDIPIWKDISPRQRKVATSLKLINDTLDDLIATCKRMVEEEELQFHEEYMNERDPSILHFLLASGDDVSSKQLRDDLMTMLIAGHETSAAVLTWTFYLLTTEPSVVAKLQEEVDSVIGDRFPTIQDMKKLKYTTRVMNESLRLYPQPPVLIRRSIDNDILGEYPIKRGEDIFISVWNLHRSPLHWDDAEKFNPERWPLDGPNPNETNQNFSYLPFGGGPRKCIGDMFASFENVVAIAMLIRRFNFQIAPGAPPVKMTTGATIHTTEGLKLTVTKRTKPLDIPSVPILPMDTSRDEVSSALS</sequence>
<organism>
    <name type="scientific">Arabidopsis thaliana</name>
    <name type="common">Mouse-ear cress</name>
    <dbReference type="NCBI Taxonomy" id="3702"/>
    <lineage>
        <taxon>Eukaryota</taxon>
        <taxon>Viridiplantae</taxon>
        <taxon>Streptophyta</taxon>
        <taxon>Embryophyta</taxon>
        <taxon>Tracheophyta</taxon>
        <taxon>Spermatophyta</taxon>
        <taxon>Magnoliopsida</taxon>
        <taxon>eudicotyledons</taxon>
        <taxon>Gunneridae</taxon>
        <taxon>Pentapetalae</taxon>
        <taxon>rosids</taxon>
        <taxon>malvids</taxon>
        <taxon>Brassicales</taxon>
        <taxon>Brassicaceae</taxon>
        <taxon>Camelineae</taxon>
        <taxon>Arabidopsis</taxon>
    </lineage>
</organism>
<feature type="transit peptide" description="Chloroplast" evidence="1">
    <location>
        <begin position="1"/>
        <end position="28"/>
    </location>
</feature>
<feature type="chain" id="PRO_0000412811" description="Protein LUTEIN DEFICIENT 5, chloroplastic">
    <location>
        <begin position="29"/>
        <end position="595"/>
    </location>
</feature>
<feature type="binding site" description="axial binding residue" evidence="5">
    <location>
        <position position="516"/>
    </location>
    <ligand>
        <name>heme</name>
        <dbReference type="ChEBI" id="CHEBI:30413"/>
    </ligand>
    <ligandPart>
        <name>Fe</name>
        <dbReference type="ChEBI" id="CHEBI:18248"/>
    </ligandPart>
</feature>
<feature type="mutagenesis site" description="In lut5-2; decreased activity." evidence="2">
    <original>E</original>
    <variation>K</variation>
    <location>
        <position position="283"/>
    </location>
</feature>
<feature type="helix" evidence="8">
    <location>
        <begin position="129"/>
        <end position="139"/>
    </location>
</feature>
<feature type="strand" evidence="8">
    <location>
        <begin position="141"/>
        <end position="147"/>
    </location>
</feature>
<feature type="strand" evidence="8">
    <location>
        <begin position="150"/>
        <end position="155"/>
    </location>
</feature>
<feature type="helix" evidence="8">
    <location>
        <begin position="158"/>
        <end position="165"/>
    </location>
</feature>
<feature type="turn" evidence="8">
    <location>
        <begin position="166"/>
        <end position="168"/>
    </location>
</feature>
<feature type="helix" evidence="8">
    <location>
        <begin position="169"/>
        <end position="171"/>
    </location>
</feature>
<feature type="helix" evidence="8">
    <location>
        <begin position="176"/>
        <end position="185"/>
    </location>
</feature>
<feature type="turn" evidence="8">
    <location>
        <begin position="189"/>
        <end position="191"/>
    </location>
</feature>
<feature type="helix" evidence="8">
    <location>
        <begin position="194"/>
        <end position="204"/>
    </location>
</feature>
<feature type="helix" evidence="8">
    <location>
        <begin position="205"/>
        <end position="207"/>
    </location>
</feature>
<feature type="helix" evidence="8">
    <location>
        <begin position="210"/>
        <end position="237"/>
    </location>
</feature>
<feature type="strand" evidence="9">
    <location>
        <begin position="240"/>
        <end position="242"/>
    </location>
</feature>
<feature type="helix" evidence="8">
    <location>
        <begin position="243"/>
        <end position="260"/>
    </location>
</feature>
<feature type="turn" evidence="8">
    <location>
        <begin position="266"/>
        <end position="268"/>
    </location>
</feature>
<feature type="helix" evidence="8">
    <location>
        <begin position="272"/>
        <end position="286"/>
    </location>
</feature>
<feature type="strand" evidence="7">
    <location>
        <begin position="294"/>
        <end position="296"/>
    </location>
</feature>
<feature type="helix" evidence="7">
    <location>
        <begin position="300"/>
        <end position="302"/>
    </location>
</feature>
<feature type="helix" evidence="8">
    <location>
        <begin position="306"/>
        <end position="334"/>
    </location>
</feature>
<feature type="helix" evidence="8">
    <location>
        <begin position="351"/>
        <end position="357"/>
    </location>
</feature>
<feature type="helix" evidence="8">
    <location>
        <begin position="364"/>
        <end position="395"/>
    </location>
</feature>
<feature type="helix" evidence="8">
    <location>
        <begin position="397"/>
        <end position="410"/>
    </location>
</feature>
<feature type="turn" evidence="8">
    <location>
        <begin position="411"/>
        <end position="413"/>
    </location>
</feature>
<feature type="helix" evidence="8">
    <location>
        <begin position="418"/>
        <end position="423"/>
    </location>
</feature>
<feature type="helix" evidence="8">
    <location>
        <begin position="425"/>
        <end position="437"/>
    </location>
</feature>
<feature type="strand" evidence="8">
    <location>
        <begin position="440"/>
        <end position="450"/>
    </location>
</feature>
<feature type="strand" evidence="8">
    <location>
        <begin position="452"/>
        <end position="454"/>
    </location>
</feature>
<feature type="strand" evidence="8">
    <location>
        <begin position="457"/>
        <end position="459"/>
    </location>
</feature>
<feature type="strand" evidence="8">
    <location>
        <begin position="464"/>
        <end position="468"/>
    </location>
</feature>
<feature type="helix" evidence="8">
    <location>
        <begin position="469"/>
        <end position="474"/>
    </location>
</feature>
<feature type="turn" evidence="8">
    <location>
        <begin position="476"/>
        <end position="478"/>
    </location>
</feature>
<feature type="turn" evidence="8">
    <location>
        <begin position="480"/>
        <end position="483"/>
    </location>
</feature>
<feature type="helix" evidence="8">
    <location>
        <begin position="487"/>
        <end position="489"/>
    </location>
</feature>
<feature type="turn" evidence="8">
    <location>
        <begin position="499"/>
        <end position="504"/>
    </location>
</feature>
<feature type="helix" evidence="8">
    <location>
        <begin position="512"/>
        <end position="514"/>
    </location>
</feature>
<feature type="helix" evidence="8">
    <location>
        <begin position="519"/>
        <end position="536"/>
    </location>
</feature>
<feature type="strand" evidence="8">
    <location>
        <begin position="537"/>
        <end position="541"/>
    </location>
</feature>
<feature type="strand" evidence="8">
    <location>
        <begin position="553"/>
        <end position="555"/>
    </location>
</feature>
<feature type="strand" evidence="8">
    <location>
        <begin position="558"/>
        <end position="560"/>
    </location>
</feature>
<feature type="strand" evidence="8">
    <location>
        <begin position="563"/>
        <end position="570"/>
    </location>
</feature>